<accession>O42804</accession>
<protein>
    <recommendedName>
        <fullName>Xylanolytic transcriptional activator xlnR</fullName>
    </recommendedName>
    <alternativeName>
        <fullName>Xylanase regulator</fullName>
    </alternativeName>
</protein>
<organism>
    <name type="scientific">Aspergillus niger</name>
    <dbReference type="NCBI Taxonomy" id="5061"/>
    <lineage>
        <taxon>Eukaryota</taxon>
        <taxon>Fungi</taxon>
        <taxon>Dikarya</taxon>
        <taxon>Ascomycota</taxon>
        <taxon>Pezizomycotina</taxon>
        <taxon>Eurotiomycetes</taxon>
        <taxon>Eurotiomycetidae</taxon>
        <taxon>Eurotiales</taxon>
        <taxon>Aspergillaceae</taxon>
        <taxon>Aspergillus</taxon>
        <taxon>Aspergillus subgen. Circumdati</taxon>
    </lineage>
</organism>
<reference key="1">
    <citation type="journal article" date="1998" name="Mol. Microbiol.">
        <title>Isolation and analysis of xlnR, encoding a transcriptional activator co-ordinating xylanolytic expression in Aspergillus niger.</title>
        <authorList>
            <person name="van Peij N.N.M.E."/>
            <person name="Visser J."/>
            <person name="De Graaff L.H."/>
        </authorList>
    </citation>
    <scope>NUCLEOTIDE SEQUENCE [GENOMIC DNA]</scope>
    <source>
        <strain>ATCC 9029 / NRRL 3 / CBS 120.49 / DSM 2466 / N400 / FGSC 732</strain>
    </source>
</reference>
<reference key="2">
    <citation type="journal article" date="1998" name="Appl. Environ. Microbiol.">
        <title>The transcriptional activator XlnR regulates both xylanolytic and endoglucanase gene expression in Aspergillus niger.</title>
        <authorList>
            <person name="van Peij N.N."/>
            <person name="Gielkens M.M."/>
            <person name="de Vries R.P."/>
            <person name="Visser J."/>
            <person name="de Graaff L.H."/>
        </authorList>
    </citation>
    <scope>FUNCTION</scope>
    <scope>DNA-BINDING</scope>
</reference>
<reference key="3">
    <citation type="journal article" date="1999" name="Appl. Environ. Microbiol.">
        <title>Two cellobiohydrolase-encoding genes from Aspergillus niger require D-xylose and the xylanolytic transcriptional activator XlnR for their expression.</title>
        <authorList>
            <person name="Gielkens M.M."/>
            <person name="Dekkers E."/>
            <person name="Visser J."/>
            <person name="de Graaff L.H."/>
        </authorList>
    </citation>
    <scope>FUNCTION</scope>
</reference>
<reference key="4">
    <citation type="journal article" date="2000" name="Mol. Microbiol.">
        <title>The Aspergillus niger transcriptional activator XlnR, which is involved in the degradation of the polysaccharides xylan and cellulose, also regulates D-xylose reductase gene expression.</title>
        <authorList>
            <person name="Hasper A.A."/>
            <person name="Visser J."/>
            <person name="de Graaff L.H."/>
        </authorList>
    </citation>
    <scope>FUNCTION</scope>
</reference>
<reference key="5">
    <citation type="journal article" date="2002" name="Appl. Environ. Microbiol.">
        <title>EglC, a new endoglucanase from Aspergillus niger with major activity towards xyloglucan.</title>
        <authorList>
            <person name="Hasper A.A."/>
            <person name="Dekkers E."/>
            <person name="van Mil M."/>
            <person name="van de Vondervoort P.J."/>
            <person name="de Graaff L.H."/>
        </authorList>
    </citation>
    <scope>FUNCTION</scope>
</reference>
<reference key="6">
    <citation type="journal article" date="2002" name="Mol. Genet. Genomics">
        <title>Regulation of the a-glucuronidase encoding gene (aguA) from Aspergillus niger.</title>
        <authorList>
            <person name="de Vries R.P."/>
            <person name="van de Vondervoort P.J.I."/>
            <person name="Hendriks L."/>
            <person name="van de Belt M."/>
            <person name="Visser J.V."/>
        </authorList>
    </citation>
    <scope>FUNCTION</scope>
</reference>
<reference key="7">
    <citation type="journal article" date="2007" name="Eukaryot. Cell">
        <title>Spatial differentiation in the vegetative mycelium of Aspergillus niger.</title>
        <authorList>
            <person name="Levin A.M."/>
            <person name="de Vries R.P."/>
            <person name="Conesa A."/>
            <person name="de Bekker C."/>
            <person name="Talon M."/>
            <person name="Menke H.H."/>
            <person name="van Peij N.N."/>
            <person name="Wosten H.A."/>
        </authorList>
    </citation>
    <scope>FUNCTION</scope>
</reference>
<reference key="8">
    <citation type="journal article" date="2007" name="Food Technol. Biotechnol.">
        <title>Regulation of pentose catabolic pathway genes of Aspergillus niger.</title>
        <authorList>
            <person name="de Groot M.J.L."/>
            <person name="van den Dool C."/>
            <person name="Woesten H.A.B."/>
            <person name="Levisson M."/>
            <person name="vanKuyk P.A."/>
            <person name="Ruijter G.J.G."/>
            <person name="de Vries R.P."/>
        </authorList>
    </citation>
    <scope>FUNCTION</scope>
    <scope>DISRUPTION PHENOTYPE</scope>
    <source>
        <strain>ATCC 9029 / NRRL 3 / CBS 120.49 / DSM 2466 / N400 / FGSC 732</strain>
    </source>
</reference>
<reference key="9">
    <citation type="journal article" date="2008" name="Proc. Natl. Acad. Sci. U.S.A.">
        <title>A trispecies Aspergillus microarray: comparative transcriptomics of three Aspergillus species.</title>
        <authorList>
            <person name="Andersen M.R."/>
            <person name="Vongsangnak W."/>
            <person name="Panagiotou G."/>
            <person name="Salazar M.P."/>
            <person name="Lehmann L."/>
            <person name="Nielsen J."/>
        </authorList>
    </citation>
    <scope>INDUCTION</scope>
    <scope>FUNCTION</scope>
</reference>
<reference key="10">
    <citation type="journal article" date="2011" name="Appl. Microbiol. Biotechnol.">
        <title>Regulation of pentose utilisation by AraR, but not XlnR, differs in Aspergillus nidulans and Aspergillus niger.</title>
        <authorList>
            <person name="Battaglia E."/>
            <person name="Hansen S.F."/>
            <person name="Leendertse A."/>
            <person name="Madrid S."/>
            <person name="Mulder H."/>
            <person name="Nikolaev I."/>
            <person name="de Vries R.P."/>
        </authorList>
    </citation>
    <scope>FUNCTION</scope>
    <source>
        <strain>ATCC 9029 / NRRL 3 / CBS 120.49 / DSM 2466 / N400 / FGSC 732</strain>
    </source>
</reference>
<reference key="11">
    <citation type="journal article" date="2011" name="Stud. Mycol.">
        <title>Analysis of regulation of pentose utilisation in Aspergillus niger reveals evolutionary adaptations in Eurotiales.</title>
        <authorList>
            <person name="Battaglia E."/>
            <person name="Visser L."/>
            <person name="Nijssen A."/>
            <person name="van Veluw G.J."/>
            <person name="Woesten H.A."/>
            <person name="de Vries R.P."/>
        </authorList>
    </citation>
    <scope>FUNCTION</scope>
    <scope>DISRUPTION PHENOTYPE</scope>
    <source>
        <strain>ATCC 9029 / NRRL 3 / CBS 120.49 / DSM 2466 / N400 / FGSC 732</strain>
    </source>
</reference>
<feature type="chain" id="PRO_0000114989" description="Xylanolytic transcriptional activator xlnR">
    <location>
        <begin position="1"/>
        <end position="945"/>
    </location>
</feature>
<feature type="DNA-binding region" description="Zn(2)-C6 fungal-type" evidence="1">
    <location>
        <begin position="125"/>
        <end position="151"/>
    </location>
</feature>
<feature type="region of interest" description="Disordered" evidence="2">
    <location>
        <begin position="1"/>
        <end position="32"/>
    </location>
</feature>
<feature type="region of interest" description="Disordered" evidence="2">
    <location>
        <begin position="53"/>
        <end position="118"/>
    </location>
</feature>
<feature type="region of interest" description="Disordered" evidence="2">
    <location>
        <begin position="172"/>
        <end position="210"/>
    </location>
</feature>
<feature type="region of interest" description="Disordered" evidence="2">
    <location>
        <begin position="559"/>
        <end position="601"/>
    </location>
</feature>
<feature type="compositionally biased region" description="Low complexity" evidence="2">
    <location>
        <begin position="1"/>
        <end position="23"/>
    </location>
</feature>
<feature type="compositionally biased region" description="Basic and acidic residues" evidence="2">
    <location>
        <begin position="73"/>
        <end position="84"/>
    </location>
</feature>
<feature type="compositionally biased region" description="Polar residues" evidence="2">
    <location>
        <begin position="176"/>
        <end position="188"/>
    </location>
</feature>
<feature type="compositionally biased region" description="Basic and acidic residues" evidence="2">
    <location>
        <begin position="565"/>
        <end position="581"/>
    </location>
</feature>
<sequence>MSTPSIPQFTSSFSPFSSGSHSTGMAPSQTVGLDTLAEGSQYVLEQLQLSRDAAGTGAGDGATSTSLRNSMSHTKDQPPFDNEKNQSTGSGFRDALQRDPLVEARSAVRKTSSSAPVRRRISRACDQCNQLRTKCDGQHPCAHCIEFGLTCEYARERKKRGKASKKDLAAAAAAATQGSNGHSGQANASLMGERTSEDSRPGQDVNGTYDSAFESHHLSSQPSHMQHASTAGISGLHESQTAPSHSQSSLGTTIDAMHLNHFNTMNDSGRPAMSISDLRSLPPSVLPPQGLSSGYNASAFALVNPQEPGSPANQFRLGSSAENPTAPFLGLSPPGQSPGWLPLPSPSPANFPSFSLHPFSSTLRYPVLQPVLPHIASIIPQSLACDLLDVYFTSSSSSHLSPLSPYVVGYIFRKQSFLHPTKPRICSPGLLASMLWVAAQTSEAAFLTSPPSARGRVCQKLLELTIGLLRPLVHGPATGEASPNYAANMVINGVALGGFGVSMDQLGAQSSATGAVDDVATYVHLATVVSASEYKAASMRWWTAAWSLARELKLGRELPPNVSHARQDGERDGDGEADKRHPPTLITSLGHGSGSSGINVTEEEREERRRLWWLLYATDRHLALCYNRPLTLLDKECGGLLQPMNDDLWQVGDFAAAAYRQVGPPVECTGHSMYGYFLPLMTILGGIVDLHHAENHPRFGLAFRNSPEWERQVLDVTRQLDTYGRSLKEFEARYTSNLTLGATDNEPVVEGAHLDHTSPSGRSSSTVGSRVSESIVHTRMVVAYGTHIMHVLHILLAGKWDPVNLLEDHDLWISSESFVSAMSHAVGAAEAAAEILEYDPDLSFMPFFFGIYLLQGSFLLLLAADKLQGDASPSVVRACETIVRAHEACVVTLNTEYQRTFRKVMRSALAQVRGRIPEDFGEQQQRRREVLALYRWSGDGSGLAL</sequence>
<name>XLNR_ASPNG</name>
<proteinExistence type="evidence at protein level"/>
<comment type="function">
    <text evidence="3 4 5 6 7 8 9 10 11 12">Transcriptional activator of the xylanolytic system. Involved in the regulation of extracellular cellulolytic and xylanolytic genes and in the regulation of the intracellular activities of D-xylose catabolic genes in the pentose catabolic pathway (PCP) in response to the presence of D-xylose. Binds to the DNA sequence 5'-GGNTAAA-3'.</text>
</comment>
<comment type="subcellular location">
    <subcellularLocation>
        <location>Nucleus</location>
    </subcellularLocation>
</comment>
<comment type="induction">
    <text evidence="8">Expressed in presence of xylose.</text>
</comment>
<comment type="disruption phenotype">
    <text evidence="10 12">Reduces growth on birchwod xylan, while growth is unaffected on D-xylose, xylitol and other carbon sources like D-glucose, L-arabinose or L-arabitol.</text>
</comment>
<comment type="similarity">
    <text evidence="13">Belongs to the xlnR/xlr1 family.</text>
</comment>
<comment type="sequence caution" evidence="13">
    <conflict type="frameshift">
        <sequence resource="EMBL-CDS" id="CAA05082"/>
    </conflict>
</comment>
<gene>
    <name type="primary">xlnR</name>
</gene>
<evidence type="ECO:0000255" key="1">
    <source>
        <dbReference type="PROSITE-ProRule" id="PRU00227"/>
    </source>
</evidence>
<evidence type="ECO:0000256" key="2">
    <source>
        <dbReference type="SAM" id="MobiDB-lite"/>
    </source>
</evidence>
<evidence type="ECO:0000269" key="3">
    <source>
    </source>
</evidence>
<evidence type="ECO:0000269" key="4">
    <source>
    </source>
</evidence>
<evidence type="ECO:0000269" key="5">
    <source>
    </source>
</evidence>
<evidence type="ECO:0000269" key="6">
    <source>
    </source>
</evidence>
<evidence type="ECO:0000269" key="7">
    <source>
    </source>
</evidence>
<evidence type="ECO:0000269" key="8">
    <source>
    </source>
</evidence>
<evidence type="ECO:0000269" key="9">
    <source>
    </source>
</evidence>
<evidence type="ECO:0000269" key="10">
    <source>
    </source>
</evidence>
<evidence type="ECO:0000269" key="11">
    <source>
    </source>
</evidence>
<evidence type="ECO:0000269" key="12">
    <source ref="8"/>
</evidence>
<evidence type="ECO:0000305" key="13"/>
<keyword id="KW-0010">Activator</keyword>
<keyword id="KW-0238">DNA-binding</keyword>
<keyword id="KW-0479">Metal-binding</keyword>
<keyword id="KW-0539">Nucleus</keyword>
<keyword id="KW-0804">Transcription</keyword>
<keyword id="KW-0805">Transcription regulation</keyword>
<keyword id="KW-0862">Zinc</keyword>
<dbReference type="EMBL" id="AJ001909">
    <property type="protein sequence ID" value="CAA05082.1"/>
    <property type="status" value="ALT_FRAME"/>
    <property type="molecule type" value="Genomic_DNA"/>
</dbReference>
<dbReference type="SMR" id="O42804"/>
<dbReference type="PaxDb" id="5061-CADANGAP00012027"/>
<dbReference type="VEuPathDB" id="FungiDB:An15g05810"/>
<dbReference type="VEuPathDB" id="FungiDB:ASPNIDRAFT2_1183692"/>
<dbReference type="VEuPathDB" id="FungiDB:ATCC64974_28320"/>
<dbReference type="VEuPathDB" id="FungiDB:M747DRAFT_233940"/>
<dbReference type="eggNOG" id="ENOG502QUI0">
    <property type="taxonomic scope" value="Eukaryota"/>
</dbReference>
<dbReference type="GO" id="GO:0005634">
    <property type="term" value="C:nucleus"/>
    <property type="evidence" value="ECO:0007669"/>
    <property type="project" value="UniProtKB-SubCell"/>
</dbReference>
<dbReference type="GO" id="GO:0003677">
    <property type="term" value="F:DNA binding"/>
    <property type="evidence" value="ECO:0007669"/>
    <property type="project" value="UniProtKB-KW"/>
</dbReference>
<dbReference type="GO" id="GO:0000981">
    <property type="term" value="F:DNA-binding transcription factor activity, RNA polymerase II-specific"/>
    <property type="evidence" value="ECO:0007669"/>
    <property type="project" value="InterPro"/>
</dbReference>
<dbReference type="GO" id="GO:0008270">
    <property type="term" value="F:zinc ion binding"/>
    <property type="evidence" value="ECO:0007669"/>
    <property type="project" value="InterPro"/>
</dbReference>
<dbReference type="GO" id="GO:0006351">
    <property type="term" value="P:DNA-templated transcription"/>
    <property type="evidence" value="ECO:0007669"/>
    <property type="project" value="InterPro"/>
</dbReference>
<dbReference type="GO" id="GO:0009893">
    <property type="term" value="P:positive regulation of metabolic process"/>
    <property type="evidence" value="ECO:0007669"/>
    <property type="project" value="UniProtKB-ARBA"/>
</dbReference>
<dbReference type="CDD" id="cd12148">
    <property type="entry name" value="fungal_TF_MHR"/>
    <property type="match status" value="1"/>
</dbReference>
<dbReference type="CDD" id="cd00067">
    <property type="entry name" value="GAL4"/>
    <property type="match status" value="1"/>
</dbReference>
<dbReference type="FunFam" id="4.10.240.10:FF:000004">
    <property type="entry name" value="Xylanolytic transcriptional activator XlnR"/>
    <property type="match status" value="1"/>
</dbReference>
<dbReference type="Gene3D" id="4.10.240.10">
    <property type="entry name" value="Zn(2)-C6 fungal-type DNA-binding domain"/>
    <property type="match status" value="1"/>
</dbReference>
<dbReference type="InterPro" id="IPR007219">
    <property type="entry name" value="Transcription_factor_dom_fun"/>
</dbReference>
<dbReference type="InterPro" id="IPR051439">
    <property type="entry name" value="XlnR/Xlr1"/>
</dbReference>
<dbReference type="InterPro" id="IPR036864">
    <property type="entry name" value="Zn2-C6_fun-type_DNA-bd_sf"/>
</dbReference>
<dbReference type="InterPro" id="IPR001138">
    <property type="entry name" value="Zn2Cys6_DnaBD"/>
</dbReference>
<dbReference type="PANTHER" id="PTHR47663">
    <property type="entry name" value="XYLANOLYTIC TRANSCRIPTIONAL ACTIVATOR XLNR-RELATED"/>
    <property type="match status" value="1"/>
</dbReference>
<dbReference type="PANTHER" id="PTHR47663:SF1">
    <property type="entry name" value="XYLANOLYTIC TRANSCRIPTIONAL ACTIVATOR XLNR-RELATED"/>
    <property type="match status" value="1"/>
</dbReference>
<dbReference type="Pfam" id="PF04082">
    <property type="entry name" value="Fungal_trans"/>
    <property type="match status" value="1"/>
</dbReference>
<dbReference type="Pfam" id="PF00172">
    <property type="entry name" value="Zn_clus"/>
    <property type="match status" value="1"/>
</dbReference>
<dbReference type="SMART" id="SM00906">
    <property type="entry name" value="Fungal_trans"/>
    <property type="match status" value="1"/>
</dbReference>
<dbReference type="SMART" id="SM00066">
    <property type="entry name" value="GAL4"/>
    <property type="match status" value="1"/>
</dbReference>
<dbReference type="SUPFAM" id="SSF57701">
    <property type="entry name" value="Zn2/Cys6 DNA-binding domain"/>
    <property type="match status" value="1"/>
</dbReference>
<dbReference type="PROSITE" id="PS50048">
    <property type="entry name" value="ZN2_CY6_FUNGAL_2"/>
    <property type="match status" value="1"/>
</dbReference>